<organism>
    <name type="scientific">Bacillus anthracis (strain A0248)</name>
    <dbReference type="NCBI Taxonomy" id="592021"/>
    <lineage>
        <taxon>Bacteria</taxon>
        <taxon>Bacillati</taxon>
        <taxon>Bacillota</taxon>
        <taxon>Bacilli</taxon>
        <taxon>Bacillales</taxon>
        <taxon>Bacillaceae</taxon>
        <taxon>Bacillus</taxon>
        <taxon>Bacillus cereus group</taxon>
    </lineage>
</organism>
<comment type="similarity">
    <text evidence="1">Belongs to the UPF0751 family.</text>
</comment>
<comment type="sequence caution" evidence="1">
    <conflict type="erroneous initiation">
        <sequence resource="EMBL-CDS" id="ACQ51051"/>
    </conflict>
</comment>
<feature type="chain" id="PRO_0000383576" description="UPF0751 protein BAA_A0112">
    <location>
        <begin position="1"/>
        <end position="99"/>
    </location>
</feature>
<name>Y5912_BACAA</name>
<gene>
    <name type="ordered locus">BAA_A0112</name>
</gene>
<dbReference type="EMBL" id="CP001599">
    <property type="protein sequence ID" value="ACQ51051.1"/>
    <property type="status" value="ALT_INIT"/>
    <property type="molecule type" value="Genomic_DNA"/>
</dbReference>
<dbReference type="RefSeq" id="WP_003159747.1">
    <property type="nucleotide sequence ID" value="NC_012656.1"/>
</dbReference>
<dbReference type="KEGG" id="bai:BAA_A0112"/>
<dbReference type="HOGENOM" id="CLU_163819_0_0_9"/>
<dbReference type="InterPro" id="IPR016772">
    <property type="entry name" value="UCP020408"/>
</dbReference>
<dbReference type="Pfam" id="PF10087">
    <property type="entry name" value="DUF2325"/>
    <property type="match status" value="1"/>
</dbReference>
<proteinExistence type="inferred from homology"/>
<reference key="1">
    <citation type="submission" date="2009-04" db="EMBL/GenBank/DDBJ databases">
        <title>Genome sequence of Bacillus anthracis A0248.</title>
        <authorList>
            <person name="Dodson R.J."/>
            <person name="Munk A.C."/>
            <person name="Bruce D."/>
            <person name="Detter C."/>
            <person name="Tapia R."/>
            <person name="Sutton G."/>
            <person name="Sims D."/>
            <person name="Brettin T."/>
        </authorList>
    </citation>
    <scope>NUCLEOTIDE SEQUENCE [LARGE SCALE GENOMIC DNA]</scope>
    <source>
        <strain>A0248</strain>
    </source>
</reference>
<keyword id="KW-0614">Plasmid</keyword>
<geneLocation type="plasmid">
    <name>pXO1</name>
</geneLocation>
<evidence type="ECO:0000305" key="1"/>
<protein>
    <recommendedName>
        <fullName>UPF0751 protein BAA_A0112</fullName>
    </recommendedName>
</protein>
<accession>C3PDZ9</accession>
<sequence>MSTILVLGGSNGRTLEKLAKKRDCQVIFHDGKNHGGVKKTFRSVIKKCDVIVIQKGACGHVSIDVAKEYAKKYDVPLLFNQGFGGTGALEMGLKHLKAA</sequence>